<feature type="chain" id="PRO_0000421758" description="Gamma-L-glutamyl-butirosin B gamma-glutamyl cyclotransferase">
    <location>
        <begin position="1"/>
        <end position="156"/>
    </location>
</feature>
<feature type="active site" description="Proton acceptor" evidence="1">
    <location>
        <position position="89"/>
    </location>
</feature>
<feature type="binding site" evidence="1">
    <location>
        <begin position="24"/>
        <end position="27"/>
    </location>
    <ligand>
        <name>substrate</name>
    </ligand>
</feature>
<name>BTRG_NIACI</name>
<evidence type="ECO:0000250" key="1"/>
<evidence type="ECO:0000269" key="2">
    <source>
    </source>
</evidence>
<evidence type="ECO:0000305" key="3"/>
<keyword id="KW-0045">Antibiotic biosynthesis</keyword>
<keyword id="KW-0456">Lyase</keyword>
<sequence>MISWTKAFTKPLKGRIFMPNLFVYGTLREGENNHKYMKEATLLSRKASIAGSLVDTGNGYPGLLLENQLVAGEWYEVSEETLKRIDELEEYFGPGDTRNLFDRIECQVNESGGTHLGWTYVYNRDDYLETRFSDWKQYRLQHASGIEEKQDVPHSL</sequence>
<dbReference type="EC" id="4.3.2.6"/>
<dbReference type="EMBL" id="AB097196">
    <property type="protein sequence ID" value="BAE07071.1"/>
    <property type="molecule type" value="Genomic_DNA"/>
</dbReference>
<dbReference type="EMBL" id="AJ781030">
    <property type="protein sequence ID" value="CAG77425.1"/>
    <property type="molecule type" value="Genomic_DNA"/>
</dbReference>
<dbReference type="SMR" id="Q4H4F0"/>
<dbReference type="KEGG" id="ag:BAE07071"/>
<dbReference type="BioCyc" id="MetaCyc:MONOMER-17276"/>
<dbReference type="UniPathway" id="UPA00964"/>
<dbReference type="GO" id="GO:0005829">
    <property type="term" value="C:cytosol"/>
    <property type="evidence" value="ECO:0007669"/>
    <property type="project" value="TreeGrafter"/>
</dbReference>
<dbReference type="GO" id="GO:0016842">
    <property type="term" value="F:amidine-lyase activity"/>
    <property type="evidence" value="ECO:0000314"/>
    <property type="project" value="UniProtKB"/>
</dbReference>
<dbReference type="GO" id="GO:0061929">
    <property type="term" value="F:gamma-glutamylaminecyclotransferase activity"/>
    <property type="evidence" value="ECO:0007669"/>
    <property type="project" value="InterPro"/>
</dbReference>
<dbReference type="GO" id="GO:0017000">
    <property type="term" value="P:antibiotic biosynthetic process"/>
    <property type="evidence" value="ECO:0000314"/>
    <property type="project" value="UniProtKB"/>
</dbReference>
<dbReference type="CDD" id="cd06661">
    <property type="entry name" value="GGCT_like"/>
    <property type="match status" value="1"/>
</dbReference>
<dbReference type="Gene3D" id="3.10.490.10">
    <property type="entry name" value="Gamma-glutamyl cyclotransferase-like"/>
    <property type="match status" value="1"/>
</dbReference>
<dbReference type="InterPro" id="IPR009288">
    <property type="entry name" value="AIG2-like_dom"/>
</dbReference>
<dbReference type="InterPro" id="IPR039126">
    <property type="entry name" value="GGACT"/>
</dbReference>
<dbReference type="InterPro" id="IPR013024">
    <property type="entry name" value="GGCT-like"/>
</dbReference>
<dbReference type="InterPro" id="IPR036568">
    <property type="entry name" value="GGCT-like_sf"/>
</dbReference>
<dbReference type="PANTHER" id="PTHR12510:SF4">
    <property type="entry name" value="GAMMA-GLUTAMYLAMINECYCLOTRANSFERASE"/>
    <property type="match status" value="1"/>
</dbReference>
<dbReference type="PANTHER" id="PTHR12510">
    <property type="entry name" value="TROPONIN C-AKIN-1 PROTEIN"/>
    <property type="match status" value="1"/>
</dbReference>
<dbReference type="Pfam" id="PF06094">
    <property type="entry name" value="GGACT"/>
    <property type="match status" value="1"/>
</dbReference>
<dbReference type="SUPFAM" id="SSF110857">
    <property type="entry name" value="Gamma-glutamyl cyclotransferase-like"/>
    <property type="match status" value="1"/>
</dbReference>
<gene>
    <name type="primary">btrG</name>
</gene>
<organism>
    <name type="scientific">Niallia circulans</name>
    <name type="common">Bacillus circulans</name>
    <dbReference type="NCBI Taxonomy" id="1397"/>
    <lineage>
        <taxon>Bacteria</taxon>
        <taxon>Bacillati</taxon>
        <taxon>Bacillota</taxon>
        <taxon>Bacilli</taxon>
        <taxon>Bacillales</taxon>
        <taxon>Bacillaceae</taxon>
        <taxon>Niallia</taxon>
    </lineage>
</organism>
<reference key="1">
    <citation type="journal article" date="2005" name="J. Antibiot.">
        <title>Extended sequence and functional analysis of the butirosin biosynthetic gene cluster in Bacillus circulans SANK 72073.</title>
        <authorList>
            <person name="Kudo F."/>
            <person name="Numakura M."/>
            <person name="Tamegai H."/>
            <person name="Yamamoto H."/>
            <person name="Eguchi T."/>
            <person name="Kakinuma K."/>
        </authorList>
    </citation>
    <scope>NUCLEOTIDE SEQUENCE [GENOMIC DNA]</scope>
    <source>
        <strain>ATCC 21557 / NCIMB 12336 / BU-1709-YQW-B6</strain>
    </source>
</reference>
<reference key="2">
    <citation type="submission" date="2004-06" db="EMBL/GenBank/DDBJ databases">
        <title>Analysis and comparison of the biosynthetic gene clusters for the 2-deoxystreptamine-containing aminoglycoside antibiotics ribostamycin, neomycin, lividomycin, paromomycin and butirosin.</title>
        <authorList>
            <person name="Aboshanab K.M."/>
            <person name="Schmidt-Beissner H."/>
            <person name="Wehmeier U.F."/>
            <person name="Welzel K."/>
            <person name="Vente A."/>
            <person name="Piepersberg W."/>
        </authorList>
    </citation>
    <scope>NUCLEOTIDE SEQUENCE [GENOMIC DNA]</scope>
    <source>
        <strain>ATCC 21557 / NCIMB 12336 / BU-1709-YQW-B6</strain>
    </source>
</reference>
<reference key="3">
    <citation type="journal article" date="2007" name="Chem. Biol.">
        <title>Biosynthesis of butirosin: transfer and deprotection of the unique amino acid side chain.</title>
        <authorList>
            <person name="Llewellyn N.M."/>
            <person name="Li Y."/>
            <person name="Spencer J.B."/>
        </authorList>
    </citation>
    <scope>FUNCTION</scope>
    <scope>CATALYTIC ACTIVITY</scope>
    <scope>PATHWAY</scope>
    <source>
        <strain>ATCC 21557 / NCIMB 12336 / BU-1709-YQW-B6</strain>
    </source>
</reference>
<comment type="function">
    <text evidence="2">Cyclotransferase that catalyzes the last step in the biosynthesis of the aminoglycoside antibiotic butirosin B. Cleaves the amide bond via transamidation using the alpha-amine of the terminal gamma-L-glutamate of the side chain, releasing it as the cyclic 5-oxoproline.</text>
</comment>
<comment type="catalytic activity">
    <reaction evidence="2">
        <text>gamma-L-glutamyl-butirosin B = butirosin B + 5-oxo-L-proline</text>
        <dbReference type="Rhea" id="RHEA:33995"/>
        <dbReference type="ChEBI" id="CHEBI:58402"/>
        <dbReference type="ChEBI" id="CHEBI:65085"/>
        <dbReference type="ChEBI" id="CHEBI:65086"/>
        <dbReference type="EC" id="4.3.2.6"/>
    </reaction>
</comment>
<comment type="pathway">
    <text evidence="2">Antibiotic biosynthesis; butirosin biosynthesis.</text>
</comment>
<comment type="similarity">
    <text evidence="3">Belongs to the gamma-glutamylcyclotransferase family.</text>
</comment>
<proteinExistence type="evidence at protein level"/>
<protein>
    <recommendedName>
        <fullName>Gamma-L-glutamyl-butirosin B gamma-glutamyl cyclotransferase</fullName>
        <ecNumber>4.3.2.6</ecNumber>
    </recommendedName>
    <alternativeName>
        <fullName>Butirosin biosynthesis protein G</fullName>
    </alternativeName>
</protein>
<accession>Q4H4F0</accession>